<dbReference type="EC" id="5.4.99.12" evidence="1"/>
<dbReference type="EMBL" id="CP000716">
    <property type="protein sequence ID" value="ABR30798.1"/>
    <property type="molecule type" value="Genomic_DNA"/>
</dbReference>
<dbReference type="RefSeq" id="WP_012057159.1">
    <property type="nucleotide sequence ID" value="NC_009616.1"/>
</dbReference>
<dbReference type="SMR" id="A6LLJ7"/>
<dbReference type="STRING" id="391009.Tmel_0937"/>
<dbReference type="KEGG" id="tme:Tmel_0937"/>
<dbReference type="eggNOG" id="COG0101">
    <property type="taxonomic scope" value="Bacteria"/>
</dbReference>
<dbReference type="HOGENOM" id="CLU_014673_0_1_0"/>
<dbReference type="OrthoDB" id="9811823at2"/>
<dbReference type="Proteomes" id="UP000001110">
    <property type="component" value="Chromosome"/>
</dbReference>
<dbReference type="GO" id="GO:0003723">
    <property type="term" value="F:RNA binding"/>
    <property type="evidence" value="ECO:0007669"/>
    <property type="project" value="InterPro"/>
</dbReference>
<dbReference type="GO" id="GO:0160147">
    <property type="term" value="F:tRNA pseudouridine(38-40) synthase activity"/>
    <property type="evidence" value="ECO:0007669"/>
    <property type="project" value="UniProtKB-EC"/>
</dbReference>
<dbReference type="GO" id="GO:0031119">
    <property type="term" value="P:tRNA pseudouridine synthesis"/>
    <property type="evidence" value="ECO:0007669"/>
    <property type="project" value="UniProtKB-UniRule"/>
</dbReference>
<dbReference type="CDD" id="cd02570">
    <property type="entry name" value="PseudoU_synth_EcTruA"/>
    <property type="match status" value="1"/>
</dbReference>
<dbReference type="FunFam" id="3.30.70.580:FF:000001">
    <property type="entry name" value="tRNA pseudouridine synthase A"/>
    <property type="match status" value="1"/>
</dbReference>
<dbReference type="Gene3D" id="3.30.70.660">
    <property type="entry name" value="Pseudouridine synthase I, catalytic domain, C-terminal subdomain"/>
    <property type="match status" value="1"/>
</dbReference>
<dbReference type="Gene3D" id="3.30.70.580">
    <property type="entry name" value="Pseudouridine synthase I, catalytic domain, N-terminal subdomain"/>
    <property type="match status" value="1"/>
</dbReference>
<dbReference type="HAMAP" id="MF_00171">
    <property type="entry name" value="TruA"/>
    <property type="match status" value="1"/>
</dbReference>
<dbReference type="InterPro" id="IPR020103">
    <property type="entry name" value="PsdUridine_synth_cat_dom_sf"/>
</dbReference>
<dbReference type="InterPro" id="IPR001406">
    <property type="entry name" value="PsdUridine_synth_TruA"/>
</dbReference>
<dbReference type="InterPro" id="IPR020097">
    <property type="entry name" value="PsdUridine_synth_TruA_a/b_dom"/>
</dbReference>
<dbReference type="InterPro" id="IPR020095">
    <property type="entry name" value="PsdUridine_synth_TruA_C"/>
</dbReference>
<dbReference type="InterPro" id="IPR020094">
    <property type="entry name" value="TruA/RsuA/RluB/E/F_N"/>
</dbReference>
<dbReference type="NCBIfam" id="TIGR00071">
    <property type="entry name" value="hisT_truA"/>
    <property type="match status" value="1"/>
</dbReference>
<dbReference type="PANTHER" id="PTHR11142">
    <property type="entry name" value="PSEUDOURIDYLATE SYNTHASE"/>
    <property type="match status" value="1"/>
</dbReference>
<dbReference type="PANTHER" id="PTHR11142:SF0">
    <property type="entry name" value="TRNA PSEUDOURIDINE SYNTHASE-LIKE 1"/>
    <property type="match status" value="1"/>
</dbReference>
<dbReference type="Pfam" id="PF01416">
    <property type="entry name" value="PseudoU_synth_1"/>
    <property type="match status" value="2"/>
</dbReference>
<dbReference type="PIRSF" id="PIRSF001430">
    <property type="entry name" value="tRNA_psdUrid_synth"/>
    <property type="match status" value="1"/>
</dbReference>
<dbReference type="SUPFAM" id="SSF55120">
    <property type="entry name" value="Pseudouridine synthase"/>
    <property type="match status" value="1"/>
</dbReference>
<gene>
    <name evidence="1" type="primary">truA</name>
    <name type="ordered locus">Tmel_0937</name>
</gene>
<keyword id="KW-0413">Isomerase</keyword>
<keyword id="KW-0819">tRNA processing</keyword>
<accession>A6LLJ7</accession>
<organism>
    <name type="scientific">Thermosipho melanesiensis (strain DSM 12029 / CIP 104789 / BI429)</name>
    <dbReference type="NCBI Taxonomy" id="391009"/>
    <lineage>
        <taxon>Bacteria</taxon>
        <taxon>Thermotogati</taxon>
        <taxon>Thermotogota</taxon>
        <taxon>Thermotogae</taxon>
        <taxon>Thermotogales</taxon>
        <taxon>Fervidobacteriaceae</taxon>
        <taxon>Thermosipho</taxon>
    </lineage>
</organism>
<feature type="chain" id="PRO_1000017205" description="tRNA pseudouridine synthase A">
    <location>
        <begin position="1"/>
        <end position="244"/>
    </location>
</feature>
<feature type="active site" description="Nucleophile" evidence="1">
    <location>
        <position position="52"/>
    </location>
</feature>
<feature type="binding site" evidence="1">
    <location>
        <position position="111"/>
    </location>
    <ligand>
        <name>substrate</name>
    </ligand>
</feature>
<name>TRUA_THEM4</name>
<reference key="1">
    <citation type="submission" date="2007-05" db="EMBL/GenBank/DDBJ databases">
        <title>Complete sequence of Thermosipho melanesiensis BI429.</title>
        <authorList>
            <consortium name="US DOE Joint Genome Institute"/>
            <person name="Copeland A."/>
            <person name="Lucas S."/>
            <person name="Lapidus A."/>
            <person name="Barry K."/>
            <person name="Glavina del Rio T."/>
            <person name="Dalin E."/>
            <person name="Tice H."/>
            <person name="Pitluck S."/>
            <person name="Chertkov O."/>
            <person name="Brettin T."/>
            <person name="Bruce D."/>
            <person name="Detter J.C."/>
            <person name="Han C."/>
            <person name="Schmutz J."/>
            <person name="Larimer F."/>
            <person name="Land M."/>
            <person name="Hauser L."/>
            <person name="Kyrpides N."/>
            <person name="Mikhailova N."/>
            <person name="Nelson K."/>
            <person name="Gogarten J.P."/>
            <person name="Noll K."/>
            <person name="Richardson P."/>
        </authorList>
    </citation>
    <scope>NUCLEOTIDE SEQUENCE [LARGE SCALE GENOMIC DNA]</scope>
    <source>
        <strain>DSM 12029 / CIP 104789 / BI429</strain>
    </source>
</reference>
<protein>
    <recommendedName>
        <fullName evidence="1">tRNA pseudouridine synthase A</fullName>
        <ecNumber evidence="1">5.4.99.12</ecNumber>
    </recommendedName>
    <alternativeName>
        <fullName evidence="1">tRNA pseudouridine(38-40) synthase</fullName>
    </alternativeName>
    <alternativeName>
        <fullName evidence="1">tRNA pseudouridylate synthase I</fullName>
    </alternativeName>
    <alternativeName>
        <fullName evidence="1">tRNA-uridine isomerase I</fullName>
    </alternativeName>
</protein>
<proteinExistence type="inferred from homology"/>
<comment type="function">
    <text evidence="1">Formation of pseudouridine at positions 38, 39 and 40 in the anticodon stem and loop of transfer RNAs.</text>
</comment>
<comment type="catalytic activity">
    <reaction evidence="1">
        <text>uridine(38/39/40) in tRNA = pseudouridine(38/39/40) in tRNA</text>
        <dbReference type="Rhea" id="RHEA:22376"/>
        <dbReference type="Rhea" id="RHEA-COMP:10085"/>
        <dbReference type="Rhea" id="RHEA-COMP:10087"/>
        <dbReference type="ChEBI" id="CHEBI:65314"/>
        <dbReference type="ChEBI" id="CHEBI:65315"/>
        <dbReference type="EC" id="5.4.99.12"/>
    </reaction>
</comment>
<comment type="subunit">
    <text evidence="1">Homodimer.</text>
</comment>
<comment type="similarity">
    <text evidence="1">Belongs to the tRNA pseudouridine synthase TruA family.</text>
</comment>
<sequence>MKRFAIEFSYDGTNFFGYQGQPNVRTVQGELEKALERIFKERIFTQGAGRTDAGVHANGQVAAFNCPIDRLAAIDIKNALNANLPEDIYVKKAWEVEKNFNPRFRAKKRIYHYLVSTNEKDVFKRNYVWHFKYKLNIEAMRIAARYLEGEHDFSSFKKGNDKKNPIRTVYRIRILNVKKELILIRVEGRSFLRSMVRNIVGSLVRVGLGQWTPEKIKKVLEARSRQEAAGTAPPHGLYLYKVLF</sequence>
<evidence type="ECO:0000255" key="1">
    <source>
        <dbReference type="HAMAP-Rule" id="MF_00171"/>
    </source>
</evidence>